<reference key="1">
    <citation type="journal article" date="2010" name="J. Bacteriol.">
        <title>The genetic basis of laboratory adaptation in Caulobacter crescentus.</title>
        <authorList>
            <person name="Marks M.E."/>
            <person name="Castro-Rojas C.M."/>
            <person name="Teiling C."/>
            <person name="Du L."/>
            <person name="Kapatral V."/>
            <person name="Walunas T.L."/>
            <person name="Crosson S."/>
        </authorList>
    </citation>
    <scope>NUCLEOTIDE SEQUENCE [LARGE SCALE GENOMIC DNA]</scope>
    <source>
        <strain>NA1000 / CB15N</strain>
    </source>
</reference>
<feature type="chain" id="PRO_1000166120" description="Large ribosomal subunit protein uL5">
    <location>
        <begin position="1"/>
        <end position="185"/>
    </location>
</feature>
<accession>B8H4E6</accession>
<comment type="function">
    <text evidence="1">This is one of the proteins that bind and probably mediate the attachment of the 5S RNA into the large ribosomal subunit, where it forms part of the central protuberance. In the 70S ribosome it contacts protein S13 of the 30S subunit (bridge B1b), connecting the 2 subunits; this bridge is implicated in subunit movement. Contacts the P site tRNA; the 5S rRNA and some of its associated proteins might help stabilize positioning of ribosome-bound tRNAs.</text>
</comment>
<comment type="subunit">
    <text evidence="1">Part of the 50S ribosomal subunit; part of the 5S rRNA/L5/L18/L25 subcomplex. Contacts the 5S rRNA and the P site tRNA. Forms a bridge to the 30S subunit in the 70S ribosome.</text>
</comment>
<comment type="similarity">
    <text evidence="1">Belongs to the universal ribosomal protein uL5 family.</text>
</comment>
<proteinExistence type="inferred from homology"/>
<organism>
    <name type="scientific">Caulobacter vibrioides (strain NA1000 / CB15N)</name>
    <name type="common">Caulobacter crescentus</name>
    <dbReference type="NCBI Taxonomy" id="565050"/>
    <lineage>
        <taxon>Bacteria</taxon>
        <taxon>Pseudomonadati</taxon>
        <taxon>Pseudomonadota</taxon>
        <taxon>Alphaproteobacteria</taxon>
        <taxon>Caulobacterales</taxon>
        <taxon>Caulobacteraceae</taxon>
        <taxon>Caulobacter</taxon>
    </lineage>
</organism>
<gene>
    <name evidence="1" type="primary">rplE</name>
    <name type="ordered locus">CCNA_01318</name>
</gene>
<sequence>MADQAYEPRLKTVYRERIRAAMKEQFGYTNEMQIPKLDKIVLNMGIGEAVADSKKAQTALKDLQAIAGQKPVATKARKSIAGFKLREGMVVGAKVTLRKDRMYEFLDRLVTIALPRVKDFRGLNGKSFDGRGNYAMGLKEHLVFPEINYDQIEQIWGMDIIVCTTAKSDQEAKALLKEFQFPFVN</sequence>
<evidence type="ECO:0000255" key="1">
    <source>
        <dbReference type="HAMAP-Rule" id="MF_01333"/>
    </source>
</evidence>
<evidence type="ECO:0000305" key="2"/>
<keyword id="KW-1185">Reference proteome</keyword>
<keyword id="KW-0687">Ribonucleoprotein</keyword>
<keyword id="KW-0689">Ribosomal protein</keyword>
<keyword id="KW-0694">RNA-binding</keyword>
<keyword id="KW-0699">rRNA-binding</keyword>
<keyword id="KW-0820">tRNA-binding</keyword>
<protein>
    <recommendedName>
        <fullName evidence="1">Large ribosomal subunit protein uL5</fullName>
    </recommendedName>
    <alternativeName>
        <fullName evidence="2">50S ribosomal protein L5</fullName>
    </alternativeName>
</protein>
<dbReference type="EMBL" id="CP001340">
    <property type="protein sequence ID" value="ACL94783.1"/>
    <property type="molecule type" value="Genomic_DNA"/>
</dbReference>
<dbReference type="RefSeq" id="WP_010919139.1">
    <property type="nucleotide sequence ID" value="NC_011916.1"/>
</dbReference>
<dbReference type="RefSeq" id="YP_002516691.1">
    <property type="nucleotide sequence ID" value="NC_011916.1"/>
</dbReference>
<dbReference type="SMR" id="B8H4E6"/>
<dbReference type="GeneID" id="7333050"/>
<dbReference type="KEGG" id="ccs:CCNA_01318"/>
<dbReference type="PATRIC" id="fig|565050.3.peg.1302"/>
<dbReference type="HOGENOM" id="CLU_061015_2_1_5"/>
<dbReference type="OrthoDB" id="9806626at2"/>
<dbReference type="PhylomeDB" id="B8H4E6"/>
<dbReference type="Proteomes" id="UP000001364">
    <property type="component" value="Chromosome"/>
</dbReference>
<dbReference type="GO" id="GO:1990904">
    <property type="term" value="C:ribonucleoprotein complex"/>
    <property type="evidence" value="ECO:0007669"/>
    <property type="project" value="UniProtKB-KW"/>
</dbReference>
<dbReference type="GO" id="GO:0005840">
    <property type="term" value="C:ribosome"/>
    <property type="evidence" value="ECO:0007669"/>
    <property type="project" value="UniProtKB-KW"/>
</dbReference>
<dbReference type="GO" id="GO:0019843">
    <property type="term" value="F:rRNA binding"/>
    <property type="evidence" value="ECO:0007669"/>
    <property type="project" value="UniProtKB-UniRule"/>
</dbReference>
<dbReference type="GO" id="GO:0003735">
    <property type="term" value="F:structural constituent of ribosome"/>
    <property type="evidence" value="ECO:0007669"/>
    <property type="project" value="InterPro"/>
</dbReference>
<dbReference type="GO" id="GO:0000049">
    <property type="term" value="F:tRNA binding"/>
    <property type="evidence" value="ECO:0007669"/>
    <property type="project" value="UniProtKB-UniRule"/>
</dbReference>
<dbReference type="GO" id="GO:0006412">
    <property type="term" value="P:translation"/>
    <property type="evidence" value="ECO:0007669"/>
    <property type="project" value="UniProtKB-UniRule"/>
</dbReference>
<dbReference type="FunFam" id="3.30.1440.10:FF:000001">
    <property type="entry name" value="50S ribosomal protein L5"/>
    <property type="match status" value="1"/>
</dbReference>
<dbReference type="Gene3D" id="3.30.1440.10">
    <property type="match status" value="1"/>
</dbReference>
<dbReference type="HAMAP" id="MF_01333_B">
    <property type="entry name" value="Ribosomal_uL5_B"/>
    <property type="match status" value="1"/>
</dbReference>
<dbReference type="InterPro" id="IPR002132">
    <property type="entry name" value="Ribosomal_uL5"/>
</dbReference>
<dbReference type="InterPro" id="IPR020930">
    <property type="entry name" value="Ribosomal_uL5_bac-type"/>
</dbReference>
<dbReference type="InterPro" id="IPR031309">
    <property type="entry name" value="Ribosomal_uL5_C"/>
</dbReference>
<dbReference type="InterPro" id="IPR020929">
    <property type="entry name" value="Ribosomal_uL5_CS"/>
</dbReference>
<dbReference type="InterPro" id="IPR022803">
    <property type="entry name" value="Ribosomal_uL5_dom_sf"/>
</dbReference>
<dbReference type="InterPro" id="IPR031310">
    <property type="entry name" value="Ribosomal_uL5_N"/>
</dbReference>
<dbReference type="NCBIfam" id="NF000585">
    <property type="entry name" value="PRK00010.1"/>
    <property type="match status" value="1"/>
</dbReference>
<dbReference type="PANTHER" id="PTHR11994">
    <property type="entry name" value="60S RIBOSOMAL PROTEIN L11-RELATED"/>
    <property type="match status" value="1"/>
</dbReference>
<dbReference type="Pfam" id="PF00281">
    <property type="entry name" value="Ribosomal_L5"/>
    <property type="match status" value="1"/>
</dbReference>
<dbReference type="Pfam" id="PF00673">
    <property type="entry name" value="Ribosomal_L5_C"/>
    <property type="match status" value="1"/>
</dbReference>
<dbReference type="PIRSF" id="PIRSF002161">
    <property type="entry name" value="Ribosomal_L5"/>
    <property type="match status" value="1"/>
</dbReference>
<dbReference type="SUPFAM" id="SSF55282">
    <property type="entry name" value="RL5-like"/>
    <property type="match status" value="1"/>
</dbReference>
<dbReference type="PROSITE" id="PS00358">
    <property type="entry name" value="RIBOSOMAL_L5"/>
    <property type="match status" value="1"/>
</dbReference>
<name>RL5_CAUVN</name>